<keyword id="KW-0967">Endosome</keyword>
<keyword id="KW-0325">Glycoprotein</keyword>
<keyword id="KW-0406">Ion transport</keyword>
<keyword id="KW-0408">Iron</keyword>
<keyword id="KW-0410">Iron transport</keyword>
<keyword id="KW-0458">Lysosome</keyword>
<keyword id="KW-0472">Membrane</keyword>
<keyword id="KW-1185">Reference proteome</keyword>
<keyword id="KW-0812">Transmembrane</keyword>
<keyword id="KW-1133">Transmembrane helix</keyword>
<keyword id="KW-0813">Transport</keyword>
<proteinExistence type="evidence at transcript level"/>
<accession>Q27981</accession>
<name>NRAM1_BOVIN</name>
<organism>
    <name type="scientific">Bos taurus</name>
    <name type="common">Bovine</name>
    <dbReference type="NCBI Taxonomy" id="9913"/>
    <lineage>
        <taxon>Eukaryota</taxon>
        <taxon>Metazoa</taxon>
        <taxon>Chordata</taxon>
        <taxon>Craniata</taxon>
        <taxon>Vertebrata</taxon>
        <taxon>Euteleostomi</taxon>
        <taxon>Mammalia</taxon>
        <taxon>Eutheria</taxon>
        <taxon>Laurasiatheria</taxon>
        <taxon>Artiodactyla</taxon>
        <taxon>Ruminantia</taxon>
        <taxon>Pecora</taxon>
        <taxon>Bovidae</taxon>
        <taxon>Bovinae</taxon>
        <taxon>Bos</taxon>
    </lineage>
</organism>
<evidence type="ECO:0000250" key="1">
    <source>
        <dbReference type="UniProtKB" id="P49279"/>
    </source>
</evidence>
<evidence type="ECO:0000255" key="2"/>
<evidence type="ECO:0000256" key="3">
    <source>
        <dbReference type="SAM" id="MobiDB-lite"/>
    </source>
</evidence>
<evidence type="ECO:0000305" key="4"/>
<reference key="1">
    <citation type="journal article" date="1996" name="Genome Res.">
        <title>Bovine natural resistance associated macrophage protein 1 (Nramp1) gene.</title>
        <authorList>
            <person name="Feng J."/>
            <person name="Li Y."/>
            <person name="Hashad M."/>
            <person name="Schurr E."/>
            <person name="Gros P."/>
            <person name="Adams L.G."/>
            <person name="Templeton J.W."/>
        </authorList>
    </citation>
    <scope>NUCLEOTIDE SEQUENCE [MRNA]</scope>
</reference>
<sequence>MSGDTGPPKQGGTRYGSISSPPSPEPQQAPPGGTYLSEKIPIPDTESGTFSLRKLWAFTGPGFLMSIAFLDPGNIESDLQAGAVAGFKLLWVLLWATVLGLLCQRLAARLGVVTGKDLGEVCHLYYPKVPRILLWLTIELAIVGSDMQEVIGTAIAFSLLSAGRIPLWGGVLITVVDTFFFLFLDNYGLRKLEAFFGFLITIMALTFGYEYVVAQPAQGALLQGLFLPSCPGCGQPELLQAVGIIGAIIMPHNIYLHSSLVKSREVDRSRRADIREANMYFLIEATIALSVSFLINLFVMAVFGQAFYKQTNQAAFNICADSSLHDYAPIFPRNNLTVAVDIYQGGVILGCLFGPPALYIWAVGLLAAGQSSTMTGTYAGQFVMEGFLKLRWSRFARVLLTRSCAILPTVLLAVFRDLRDLSGLNDLLNVLQSLLLPFAVLPILTFTSMPALMQEFANGLVSKVITSSIMVLVCAVNLYFVISYLPSLPHPAYFSLVALLAAAYLGLTTYLVWTCLITQGATLLAHSSHQRFLYGLPEEDQEKGRTSG</sequence>
<gene>
    <name type="primary">SLC11A1</name>
    <name type="synonym">NRAMP1</name>
</gene>
<protein>
    <recommendedName>
        <fullName>Natural resistance-associated macrophage protein 1</fullName>
        <shortName>NRAMP 1</shortName>
    </recommendedName>
    <alternativeName>
        <fullName>Solute carrier family 11 member 1</fullName>
    </alternativeName>
</protein>
<comment type="function">
    <text evidence="1">Macrophage-specific antiporter that fluxes metal ions in either direction against a proton gradient. Localized to late endosomal lysosomal membranes, delivers bivalent cations from the cytosol into these acidic compartments where they may directly affect antimicrobial activity. Involved in iron metabolism and host natural resistance to infection with intracellular parasites. Pathogen resistance involves sequestration of Fe(2+) and Mn(2+), cofactors of both prokaryotic and eukaryotic catalases and superoxide dismutases, not only to protect the macrophage against its own generation of reactive oxygen species, but to deny the cations to the pathogen for synthesis of its protective enzymes.</text>
</comment>
<comment type="catalytic activity">
    <reaction evidence="1">
        <text>Zn(2+)(in) + H(+)(out) = Zn(2+)(out) + H(+)(in)</text>
        <dbReference type="Rhea" id="RHEA:28839"/>
        <dbReference type="ChEBI" id="CHEBI:15378"/>
        <dbReference type="ChEBI" id="CHEBI:29105"/>
    </reaction>
</comment>
<comment type="catalytic activity">
    <reaction evidence="1">
        <text>Fe(2+)(in) + H(+)(out) = Fe(2+)(out) + H(+)(in)</text>
        <dbReference type="Rhea" id="RHEA:29439"/>
        <dbReference type="ChEBI" id="CHEBI:15378"/>
        <dbReference type="ChEBI" id="CHEBI:29033"/>
    </reaction>
</comment>
<comment type="catalytic activity">
    <reaction evidence="1">
        <text>Mn(2+)(in) + H(+)(out) = Mn(2+)(out) + H(+)(in)</text>
        <dbReference type="Rhea" id="RHEA:73063"/>
        <dbReference type="ChEBI" id="CHEBI:15378"/>
        <dbReference type="ChEBI" id="CHEBI:29035"/>
    </reaction>
</comment>
<comment type="subcellular location">
    <subcellularLocation>
        <location evidence="1">Late endosome membrane</location>
        <topology evidence="2">Multi-pass membrane protein</topology>
    </subcellularLocation>
    <subcellularLocation>
        <location evidence="1">Lysosome membrane</location>
        <topology evidence="2">Multi-pass membrane protein</topology>
    </subcellularLocation>
</comment>
<comment type="similarity">
    <text evidence="4">Belongs to the NRAMP family.</text>
</comment>
<feature type="chain" id="PRO_0000212584" description="Natural resistance-associated macrophage protein 1">
    <location>
        <begin position="1"/>
        <end position="548"/>
    </location>
</feature>
<feature type="topological domain" description="Cytoplasmic" evidence="2">
    <location>
        <begin position="1"/>
        <end position="55"/>
    </location>
</feature>
<feature type="transmembrane region" description="Helical" evidence="2">
    <location>
        <begin position="56"/>
        <end position="73"/>
    </location>
</feature>
<feature type="topological domain" description="Extracellular" evidence="2">
    <location>
        <begin position="74"/>
        <end position="82"/>
    </location>
</feature>
<feature type="transmembrane region" description="Helical" evidence="2">
    <location>
        <begin position="83"/>
        <end position="102"/>
    </location>
</feature>
<feature type="topological domain" description="Cytoplasmic" evidence="2">
    <location>
        <begin position="103"/>
        <end position="139"/>
    </location>
</feature>
<feature type="transmembrane region" description="Helical" evidence="2">
    <location>
        <begin position="140"/>
        <end position="160"/>
    </location>
</feature>
<feature type="topological domain" description="Extracellular" evidence="2">
    <location>
        <begin position="161"/>
        <end position="164"/>
    </location>
</feature>
<feature type="transmembrane region" description="Helical" evidence="2">
    <location>
        <begin position="165"/>
        <end position="184"/>
    </location>
</feature>
<feature type="topological domain" description="Cytoplasmic" evidence="2">
    <location>
        <begin position="185"/>
        <end position="193"/>
    </location>
</feature>
<feature type="transmembrane region" description="Helical" evidence="2">
    <location>
        <begin position="194"/>
        <end position="214"/>
    </location>
</feature>
<feature type="topological domain" description="Extracellular" evidence="2">
    <location>
        <begin position="215"/>
        <end position="237"/>
    </location>
</feature>
<feature type="transmembrane region" description="Helical" evidence="2">
    <location>
        <begin position="238"/>
        <end position="256"/>
    </location>
</feature>
<feature type="topological domain" description="Cytoplasmic" evidence="2">
    <location>
        <begin position="257"/>
        <end position="284"/>
    </location>
</feature>
<feature type="transmembrane region" description="Helical" evidence="2">
    <location>
        <begin position="285"/>
        <end position="304"/>
    </location>
</feature>
<feature type="topological domain" description="Extracellular" evidence="2">
    <location>
        <begin position="305"/>
        <end position="346"/>
    </location>
</feature>
<feature type="transmembrane region" description="Helical" evidence="2">
    <location>
        <begin position="347"/>
        <end position="366"/>
    </location>
</feature>
<feature type="topological domain" description="Cytoplasmic" evidence="2">
    <location>
        <begin position="367"/>
        <end position="397"/>
    </location>
</feature>
<feature type="transmembrane region" description="Helical" evidence="2">
    <location>
        <begin position="398"/>
        <end position="415"/>
    </location>
</feature>
<feature type="topological domain" description="Extracellular" evidence="2">
    <location>
        <begin position="416"/>
        <end position="426"/>
    </location>
</feature>
<feature type="transmembrane region" description="Helical" evidence="2">
    <location>
        <begin position="427"/>
        <end position="447"/>
    </location>
</feature>
<feature type="topological domain" description="Cytoplasmic" evidence="2">
    <location>
        <begin position="448"/>
        <end position="463"/>
    </location>
</feature>
<feature type="transmembrane region" description="Helical" evidence="2">
    <location>
        <begin position="464"/>
        <end position="485"/>
    </location>
</feature>
<feature type="topological domain" description="Extracellular" evidence="2">
    <location>
        <begin position="486"/>
        <end position="493"/>
    </location>
</feature>
<feature type="transmembrane region" description="Helical" evidence="2">
    <location>
        <begin position="494"/>
        <end position="513"/>
    </location>
</feature>
<feature type="topological domain" description="Cytoplasmic" evidence="2">
    <location>
        <begin position="514"/>
        <end position="548"/>
    </location>
</feature>
<feature type="region of interest" description="Disordered" evidence="3">
    <location>
        <begin position="1"/>
        <end position="38"/>
    </location>
</feature>
<feature type="glycosylation site" description="N-linked (GlcNAc...) asparagine" evidence="2">
    <location>
        <position position="335"/>
    </location>
</feature>
<dbReference type="EMBL" id="U12862">
    <property type="protein sequence ID" value="AAA82582.1"/>
    <property type="molecule type" value="mRNA"/>
</dbReference>
<dbReference type="RefSeq" id="NP_777077.1">
    <property type="nucleotide sequence ID" value="NM_174652.2"/>
</dbReference>
<dbReference type="SMR" id="Q27981"/>
<dbReference type="FunCoup" id="Q27981">
    <property type="interactions" value="850"/>
</dbReference>
<dbReference type="STRING" id="9913.ENSBTAP00000020627"/>
<dbReference type="GlyCosmos" id="Q27981">
    <property type="glycosylation" value="1 site, No reported glycans"/>
</dbReference>
<dbReference type="GlyGen" id="Q27981">
    <property type="glycosylation" value="1 site"/>
</dbReference>
<dbReference type="PaxDb" id="9913-ENSBTAP00000020627"/>
<dbReference type="GeneID" id="282470"/>
<dbReference type="KEGG" id="bta:282470"/>
<dbReference type="CTD" id="6556"/>
<dbReference type="eggNOG" id="KOG1291">
    <property type="taxonomic scope" value="Eukaryota"/>
</dbReference>
<dbReference type="InParanoid" id="Q27981"/>
<dbReference type="OrthoDB" id="409173at2759"/>
<dbReference type="Proteomes" id="UP000009136">
    <property type="component" value="Unplaced"/>
</dbReference>
<dbReference type="GO" id="GO:0010008">
    <property type="term" value="C:endosome membrane"/>
    <property type="evidence" value="ECO:0000318"/>
    <property type="project" value="GO_Central"/>
</dbReference>
<dbReference type="GO" id="GO:0031902">
    <property type="term" value="C:late endosome membrane"/>
    <property type="evidence" value="ECO:0007669"/>
    <property type="project" value="UniProtKB-SubCell"/>
</dbReference>
<dbReference type="GO" id="GO:0005765">
    <property type="term" value="C:lysosomal membrane"/>
    <property type="evidence" value="ECO:0000318"/>
    <property type="project" value="GO_Central"/>
</dbReference>
<dbReference type="GO" id="GO:0030670">
    <property type="term" value="C:phagocytic vesicle membrane"/>
    <property type="evidence" value="ECO:0000318"/>
    <property type="project" value="GO_Central"/>
</dbReference>
<dbReference type="GO" id="GO:0005886">
    <property type="term" value="C:plasma membrane"/>
    <property type="evidence" value="ECO:0000318"/>
    <property type="project" value="GO_Central"/>
</dbReference>
<dbReference type="GO" id="GO:0015086">
    <property type="term" value="F:cadmium ion transmembrane transporter activity"/>
    <property type="evidence" value="ECO:0000318"/>
    <property type="project" value="GO_Central"/>
</dbReference>
<dbReference type="GO" id="GO:0005381">
    <property type="term" value="F:iron ion transmembrane transporter activity"/>
    <property type="evidence" value="ECO:0000250"/>
    <property type="project" value="UniProtKB"/>
</dbReference>
<dbReference type="GO" id="GO:0005384">
    <property type="term" value="F:manganese ion transmembrane transporter activity"/>
    <property type="evidence" value="ECO:0000250"/>
    <property type="project" value="UniProtKB"/>
</dbReference>
<dbReference type="GO" id="GO:0051139">
    <property type="term" value="F:metal cation:proton antiporter activity"/>
    <property type="evidence" value="ECO:0000250"/>
    <property type="project" value="UniProtKB"/>
</dbReference>
<dbReference type="GO" id="GO:0034755">
    <property type="term" value="P:iron ion transmembrane transport"/>
    <property type="evidence" value="ECO:0000318"/>
    <property type="project" value="GO_Central"/>
</dbReference>
<dbReference type="GO" id="GO:0006826">
    <property type="term" value="P:iron ion transport"/>
    <property type="evidence" value="ECO:0000250"/>
    <property type="project" value="UniProtKB"/>
</dbReference>
<dbReference type="GO" id="GO:0006828">
    <property type="term" value="P:manganese ion transport"/>
    <property type="evidence" value="ECO:0000250"/>
    <property type="project" value="UniProtKB"/>
</dbReference>
<dbReference type="HAMAP" id="MF_00221">
    <property type="entry name" value="NRAMP"/>
    <property type="match status" value="1"/>
</dbReference>
<dbReference type="InterPro" id="IPR001046">
    <property type="entry name" value="NRAMP_fam"/>
</dbReference>
<dbReference type="NCBIfam" id="TIGR01197">
    <property type="entry name" value="nramp"/>
    <property type="match status" value="1"/>
</dbReference>
<dbReference type="NCBIfam" id="NF037982">
    <property type="entry name" value="Nramp_1"/>
    <property type="match status" value="1"/>
</dbReference>
<dbReference type="PANTHER" id="PTHR11706:SF52">
    <property type="entry name" value="NATURAL RESISTANCE-ASSOCIATED MACROPHAGE PROTEIN 1"/>
    <property type="match status" value="1"/>
</dbReference>
<dbReference type="PANTHER" id="PTHR11706">
    <property type="entry name" value="SOLUTE CARRIER PROTEIN FAMILY 11 MEMBER"/>
    <property type="match status" value="1"/>
</dbReference>
<dbReference type="Pfam" id="PF01566">
    <property type="entry name" value="Nramp"/>
    <property type="match status" value="1"/>
</dbReference>
<dbReference type="PRINTS" id="PR00447">
    <property type="entry name" value="NATRESASSCMP"/>
</dbReference>